<accession>Q8CK44</accession>
<reference key="1">
    <citation type="journal article" date="2002" name="Nature">
        <title>Complete genome sequence of the model actinomycete Streptomyces coelicolor A3(2).</title>
        <authorList>
            <person name="Bentley S.D."/>
            <person name="Chater K.F."/>
            <person name="Cerdeno-Tarraga A.-M."/>
            <person name="Challis G.L."/>
            <person name="Thomson N.R."/>
            <person name="James K.D."/>
            <person name="Harris D.E."/>
            <person name="Quail M.A."/>
            <person name="Kieser H."/>
            <person name="Harper D."/>
            <person name="Bateman A."/>
            <person name="Brown S."/>
            <person name="Chandra G."/>
            <person name="Chen C.W."/>
            <person name="Collins M."/>
            <person name="Cronin A."/>
            <person name="Fraser A."/>
            <person name="Goble A."/>
            <person name="Hidalgo J."/>
            <person name="Hornsby T."/>
            <person name="Howarth S."/>
            <person name="Huang C.-H."/>
            <person name="Kieser T."/>
            <person name="Larke L."/>
            <person name="Murphy L.D."/>
            <person name="Oliver K."/>
            <person name="O'Neil S."/>
            <person name="Rabbinowitsch E."/>
            <person name="Rajandream M.A."/>
            <person name="Rutherford K.M."/>
            <person name="Rutter S."/>
            <person name="Seeger K."/>
            <person name="Saunders D."/>
            <person name="Sharp S."/>
            <person name="Squares R."/>
            <person name="Squares S."/>
            <person name="Taylor K."/>
            <person name="Warren T."/>
            <person name="Wietzorrek A."/>
            <person name="Woodward J.R."/>
            <person name="Barrell B.G."/>
            <person name="Parkhill J."/>
            <person name="Hopwood D.A."/>
        </authorList>
    </citation>
    <scope>NUCLEOTIDE SEQUENCE [LARGE SCALE GENOMIC DNA]</scope>
    <source>
        <strain>ATCC BAA-471 / A3(2) / M145</strain>
    </source>
</reference>
<protein>
    <recommendedName>
        <fullName evidence="1">Ribose import ATP-binding protein RbsA 1</fullName>
        <ecNumber evidence="1">7.5.2.7</ecNumber>
    </recommendedName>
</protein>
<sequence length="505" mass="53960">MTHPSDTGSAPVLALRDVSKSFGAVRALRDVSLELFPGEVHALAGENGAGKSTLIKTLAGVHRPDAGHVLLDGAPVVFHGPGDARDAGIAVIYQEPTLFPDLSIAENIFMGRQPRRALGRIDHKATHDATAALMLRLGVELDPDRPARGLSIADQQIVEIAKALSFDARVLIMDEPTAALTGSEVARLFGVVRTLRDQGAAVLFISHRLEEIFHICARVTTLRDGAWIASEPLEGMTEDDLVRRMVGRDLDELYPKQEVTPGERALSVRRLTREGVFTDVSFEVRRGEIVALAGLVGAGRTEVARAVFGVDRWDAGEVEVDGKPLVNGAPSTAMAAGLALVPEDRRAQGLVMDMSIERNIGLTGLRTTVKAGLVDRGAERSRSLDWAVKLQVKYARIADTVATLSGGNQQKVVLAKWLATGPKVLIVDEPTRGIDVGTKAEVHRLLSQLAADGVAVLMISSDLPEVLGMADRVLVMHEGRLTAEISRTDATEETVMAAATGRAAA</sequence>
<evidence type="ECO:0000255" key="1">
    <source>
        <dbReference type="HAMAP-Rule" id="MF_01716"/>
    </source>
</evidence>
<feature type="chain" id="PRO_0000261110" description="Ribose import ATP-binding protein RbsA 1">
    <location>
        <begin position="1"/>
        <end position="505"/>
    </location>
</feature>
<feature type="domain" description="ABC transporter 1" evidence="1">
    <location>
        <begin position="13"/>
        <end position="249"/>
    </location>
</feature>
<feature type="domain" description="ABC transporter 2" evidence="1">
    <location>
        <begin position="254"/>
        <end position="503"/>
    </location>
</feature>
<feature type="binding site" evidence="1">
    <location>
        <begin position="45"/>
        <end position="52"/>
    </location>
    <ligand>
        <name>ATP</name>
        <dbReference type="ChEBI" id="CHEBI:30616"/>
    </ligand>
</feature>
<proteinExistence type="inferred from homology"/>
<name>RBSA1_STRCO</name>
<gene>
    <name evidence="1" type="primary">rbsA1</name>
    <name type="ordered locus">SCO0811</name>
    <name type="ORF">SCF43.22c</name>
    <name type="ORF">SCF43A.01c</name>
</gene>
<organism>
    <name type="scientific">Streptomyces coelicolor (strain ATCC BAA-471 / A3(2) / M145)</name>
    <dbReference type="NCBI Taxonomy" id="100226"/>
    <lineage>
        <taxon>Bacteria</taxon>
        <taxon>Bacillati</taxon>
        <taxon>Actinomycetota</taxon>
        <taxon>Actinomycetes</taxon>
        <taxon>Kitasatosporales</taxon>
        <taxon>Streptomycetaceae</taxon>
        <taxon>Streptomyces</taxon>
        <taxon>Streptomyces albidoflavus group</taxon>
    </lineage>
</organism>
<keyword id="KW-0067">ATP-binding</keyword>
<keyword id="KW-1003">Cell membrane</keyword>
<keyword id="KW-0472">Membrane</keyword>
<keyword id="KW-0547">Nucleotide-binding</keyword>
<keyword id="KW-1185">Reference proteome</keyword>
<keyword id="KW-0677">Repeat</keyword>
<keyword id="KW-0762">Sugar transport</keyword>
<keyword id="KW-1278">Translocase</keyword>
<keyword id="KW-0813">Transport</keyword>
<dbReference type="EC" id="7.5.2.7" evidence="1"/>
<dbReference type="EMBL" id="AL939106">
    <property type="protein sequence ID" value="CAD55279.1"/>
    <property type="molecule type" value="Genomic_DNA"/>
</dbReference>
<dbReference type="PIR" id="T36424">
    <property type="entry name" value="T36424"/>
</dbReference>
<dbReference type="RefSeq" id="NP_733516.1">
    <property type="nucleotide sequence ID" value="NC_003888.3"/>
</dbReference>
<dbReference type="RefSeq" id="WP_003978049.1">
    <property type="nucleotide sequence ID" value="NZ_VNID01000004.1"/>
</dbReference>
<dbReference type="SMR" id="Q8CK44"/>
<dbReference type="STRING" id="100226.gene:17758394"/>
<dbReference type="PaxDb" id="100226-SCO0811"/>
<dbReference type="KEGG" id="sco:SCO0811"/>
<dbReference type="PATRIC" id="fig|100226.15.peg.803"/>
<dbReference type="eggNOG" id="COG1129">
    <property type="taxonomic scope" value="Bacteria"/>
</dbReference>
<dbReference type="HOGENOM" id="CLU_000604_92_3_11"/>
<dbReference type="InParanoid" id="Q8CK44"/>
<dbReference type="OrthoDB" id="8416490at2"/>
<dbReference type="PhylomeDB" id="Q8CK44"/>
<dbReference type="Proteomes" id="UP000001973">
    <property type="component" value="Chromosome"/>
</dbReference>
<dbReference type="GO" id="GO:0005886">
    <property type="term" value="C:plasma membrane"/>
    <property type="evidence" value="ECO:0007669"/>
    <property type="project" value="UniProtKB-SubCell"/>
</dbReference>
<dbReference type="GO" id="GO:0015611">
    <property type="term" value="F:ABC-type D-ribose transporter activity"/>
    <property type="evidence" value="ECO:0007669"/>
    <property type="project" value="UniProtKB-EC"/>
</dbReference>
<dbReference type="GO" id="GO:0005524">
    <property type="term" value="F:ATP binding"/>
    <property type="evidence" value="ECO:0007669"/>
    <property type="project" value="UniProtKB-KW"/>
</dbReference>
<dbReference type="GO" id="GO:0016887">
    <property type="term" value="F:ATP hydrolysis activity"/>
    <property type="evidence" value="ECO:0007669"/>
    <property type="project" value="InterPro"/>
</dbReference>
<dbReference type="CDD" id="cd03216">
    <property type="entry name" value="ABC_Carb_Monos_I"/>
    <property type="match status" value="1"/>
</dbReference>
<dbReference type="CDD" id="cd03215">
    <property type="entry name" value="ABC_Carb_Monos_II"/>
    <property type="match status" value="1"/>
</dbReference>
<dbReference type="FunFam" id="3.40.50.300:FF:000127">
    <property type="entry name" value="Ribose import ATP-binding protein RbsA"/>
    <property type="match status" value="1"/>
</dbReference>
<dbReference type="Gene3D" id="3.40.50.300">
    <property type="entry name" value="P-loop containing nucleotide triphosphate hydrolases"/>
    <property type="match status" value="2"/>
</dbReference>
<dbReference type="InterPro" id="IPR003593">
    <property type="entry name" value="AAA+_ATPase"/>
</dbReference>
<dbReference type="InterPro" id="IPR050107">
    <property type="entry name" value="ABC_carbohydrate_import_ATPase"/>
</dbReference>
<dbReference type="InterPro" id="IPR003439">
    <property type="entry name" value="ABC_transporter-like_ATP-bd"/>
</dbReference>
<dbReference type="InterPro" id="IPR017871">
    <property type="entry name" value="ABC_transporter-like_CS"/>
</dbReference>
<dbReference type="InterPro" id="IPR027417">
    <property type="entry name" value="P-loop_NTPase"/>
</dbReference>
<dbReference type="PANTHER" id="PTHR43790">
    <property type="entry name" value="CARBOHYDRATE TRANSPORT ATP-BINDING PROTEIN MG119-RELATED"/>
    <property type="match status" value="1"/>
</dbReference>
<dbReference type="PANTHER" id="PTHR43790:SF3">
    <property type="entry name" value="D-ALLOSE IMPORT ATP-BINDING PROTEIN ALSA-RELATED"/>
    <property type="match status" value="1"/>
</dbReference>
<dbReference type="Pfam" id="PF00005">
    <property type="entry name" value="ABC_tran"/>
    <property type="match status" value="2"/>
</dbReference>
<dbReference type="SMART" id="SM00382">
    <property type="entry name" value="AAA"/>
    <property type="match status" value="2"/>
</dbReference>
<dbReference type="SUPFAM" id="SSF52540">
    <property type="entry name" value="P-loop containing nucleoside triphosphate hydrolases"/>
    <property type="match status" value="2"/>
</dbReference>
<dbReference type="PROSITE" id="PS00211">
    <property type="entry name" value="ABC_TRANSPORTER_1"/>
    <property type="match status" value="1"/>
</dbReference>
<dbReference type="PROSITE" id="PS50893">
    <property type="entry name" value="ABC_TRANSPORTER_2"/>
    <property type="match status" value="2"/>
</dbReference>
<dbReference type="PROSITE" id="PS51254">
    <property type="entry name" value="RBSA"/>
    <property type="match status" value="1"/>
</dbReference>
<comment type="function">
    <text evidence="1">Part of the ABC transporter complex RbsABC involved in ribose import. Responsible for energy coupling to the transport system.</text>
</comment>
<comment type="catalytic activity">
    <reaction evidence="1">
        <text>D-ribose(out) + ATP + H2O = D-ribose(in) + ADP + phosphate + H(+)</text>
        <dbReference type="Rhea" id="RHEA:29903"/>
        <dbReference type="ChEBI" id="CHEBI:15377"/>
        <dbReference type="ChEBI" id="CHEBI:15378"/>
        <dbReference type="ChEBI" id="CHEBI:30616"/>
        <dbReference type="ChEBI" id="CHEBI:43474"/>
        <dbReference type="ChEBI" id="CHEBI:47013"/>
        <dbReference type="ChEBI" id="CHEBI:456216"/>
        <dbReference type="EC" id="7.5.2.7"/>
    </reaction>
</comment>
<comment type="subunit">
    <text evidence="1">The complex is composed of an ATP-binding protein (RbsA), two transmembrane proteins (RbsC) and a solute-binding protein (RbsB).</text>
</comment>
<comment type="subcellular location">
    <subcellularLocation>
        <location evidence="1">Cell membrane</location>
        <topology evidence="1">Peripheral membrane protein</topology>
    </subcellularLocation>
</comment>
<comment type="similarity">
    <text evidence="1">Belongs to the ABC transporter superfamily. Ribose importer (TC 3.A.1.2.1) family.</text>
</comment>